<reference key="1">
    <citation type="journal article" date="2008" name="Nat. Biotechnol.">
        <title>Genome sequencing and analysis of the filamentous fungus Penicillium chrysogenum.</title>
        <authorList>
            <person name="van den Berg M.A."/>
            <person name="Albang R."/>
            <person name="Albermann K."/>
            <person name="Badger J.H."/>
            <person name="Daran J.-M."/>
            <person name="Driessen A.J.M."/>
            <person name="Garcia-Estrada C."/>
            <person name="Fedorova N.D."/>
            <person name="Harris D.M."/>
            <person name="Heijne W.H.M."/>
            <person name="Joardar V.S."/>
            <person name="Kiel J.A.K.W."/>
            <person name="Kovalchuk A."/>
            <person name="Martin J.F."/>
            <person name="Nierman W.C."/>
            <person name="Nijland J.G."/>
            <person name="Pronk J.T."/>
            <person name="Roubos J.A."/>
            <person name="van der Klei I.J."/>
            <person name="van Peij N.N.M.E."/>
            <person name="Veenhuis M."/>
            <person name="von Doehren H."/>
            <person name="Wagner C."/>
            <person name="Wortman J.R."/>
            <person name="Bovenberg R.A.L."/>
        </authorList>
    </citation>
    <scope>NUCLEOTIDE SEQUENCE [LARGE SCALE GENOMIC DNA]</scope>
    <source>
        <strain>ATCC 28089 / DSM 1075 / NRRL 1951 / Wisconsin 54-1255</strain>
    </source>
</reference>
<protein>
    <recommendedName>
        <fullName>Leucine aminopeptidase 1</fullName>
        <ecNumber>3.4.11.-</ecNumber>
    </recommendedName>
    <alternativeName>
        <fullName>Leucyl aminopeptidase 1</fullName>
        <shortName>LAP1</shortName>
    </alternativeName>
</protein>
<sequence>MKFLTLALSATATAMIIVNPEQQPLAPSIVQNPQHKSLIELAPYRTRWVTEEEKWSLKLDGVNFIDVTDEYQSGSYGTLHTTRVVHYPGAMEHAHEILPLTETLDKSNMRSNLEHFTSFYTRYYKSQTGIESATWLFDQVTAAVHESGASDHGATVERFAHPWGQFSIIARIPGQTDNTVILGSHQDSINLFLPSILAAPGADDDGSGTVTILEALRALLRSETIAHGQARNTIEFHWYSAEEGGLLGSQAVYANYKKNQRNVKAMLQQDMTGYVQGTLDAGEKESVGVIIDYVDQGLTAFIKEVITTYCDVPYVETKCGYACSDHASASRYGYPSAFVIESQFENSDKRIHTTEDKIEYLSFDHMLQHAKMSLAFAYELAFAPF</sequence>
<name>LAP1_PENRW</name>
<accession>B6H3H1</accession>
<organism>
    <name type="scientific">Penicillium rubens (strain ATCC 28089 / DSM 1075 / NRRL 1951 / Wisconsin 54-1255)</name>
    <name type="common">Penicillium chrysogenum</name>
    <dbReference type="NCBI Taxonomy" id="500485"/>
    <lineage>
        <taxon>Eukaryota</taxon>
        <taxon>Fungi</taxon>
        <taxon>Dikarya</taxon>
        <taxon>Ascomycota</taxon>
        <taxon>Pezizomycotina</taxon>
        <taxon>Eurotiomycetes</taxon>
        <taxon>Eurotiomycetidae</taxon>
        <taxon>Eurotiales</taxon>
        <taxon>Aspergillaceae</taxon>
        <taxon>Penicillium</taxon>
        <taxon>Penicillium chrysogenum species complex</taxon>
    </lineage>
</organism>
<evidence type="ECO:0000250" key="1"/>
<evidence type="ECO:0000255" key="2"/>
<evidence type="ECO:0000305" key="3"/>
<proteinExistence type="inferred from homology"/>
<gene>
    <name type="primary">lap1</name>
    <name type="ORF">Pc13g06380</name>
</gene>
<feature type="signal peptide" evidence="2">
    <location>
        <begin position="1"/>
        <end position="14"/>
    </location>
</feature>
<feature type="propeptide" id="PRO_0000412437" evidence="1">
    <location>
        <begin position="15"/>
        <end position="85"/>
    </location>
</feature>
<feature type="chain" id="PRO_5000409004" description="Leucine aminopeptidase 1">
    <location>
        <begin position="86"/>
        <end position="385"/>
    </location>
</feature>
<feature type="binding site" evidence="1">
    <location>
        <position position="185"/>
    </location>
    <ligand>
        <name>Zn(2+)</name>
        <dbReference type="ChEBI" id="CHEBI:29105"/>
        <label>1</label>
    </ligand>
</feature>
<feature type="binding site" evidence="1">
    <location>
        <position position="204"/>
    </location>
    <ligand>
        <name>Zn(2+)</name>
        <dbReference type="ChEBI" id="CHEBI:29105"/>
        <label>1</label>
    </ligand>
</feature>
<feature type="binding site" evidence="1">
    <location>
        <position position="204"/>
    </location>
    <ligand>
        <name>Zn(2+)</name>
        <dbReference type="ChEBI" id="CHEBI:29105"/>
        <label>2</label>
        <note>catalytic</note>
    </ligand>
</feature>
<feature type="binding site" evidence="1">
    <location>
        <position position="243"/>
    </location>
    <ligand>
        <name>Zn(2+)</name>
        <dbReference type="ChEBI" id="CHEBI:29105"/>
        <label>2</label>
        <note>catalytic</note>
    </ligand>
</feature>
<feature type="binding site" evidence="1">
    <location>
        <position position="270"/>
    </location>
    <ligand>
        <name>Zn(2+)</name>
        <dbReference type="ChEBI" id="CHEBI:29105"/>
        <label>1</label>
    </ligand>
</feature>
<feature type="binding site" evidence="1">
    <location>
        <position position="352"/>
    </location>
    <ligand>
        <name>Zn(2+)</name>
        <dbReference type="ChEBI" id="CHEBI:29105"/>
        <label>2</label>
        <note>catalytic</note>
    </ligand>
</feature>
<feature type="disulfide bond" evidence="1">
    <location>
        <begin position="319"/>
        <end position="323"/>
    </location>
</feature>
<dbReference type="EC" id="3.4.11.-"/>
<dbReference type="EMBL" id="AM920428">
    <property type="protein sequence ID" value="CAP91707.1"/>
    <property type="molecule type" value="Genomic_DNA"/>
</dbReference>
<dbReference type="RefSeq" id="XP_002559072.1">
    <property type="nucleotide sequence ID" value="XM_002559026.1"/>
</dbReference>
<dbReference type="SMR" id="B6H3H1"/>
<dbReference type="STRING" id="500485.B6H3H1"/>
<dbReference type="MEROPS" id="M28.022"/>
<dbReference type="GeneID" id="8305510"/>
<dbReference type="KEGG" id="pcs:N7525_003525"/>
<dbReference type="VEuPathDB" id="FungiDB:PCH_Pc13g06380"/>
<dbReference type="eggNOG" id="KOG2195">
    <property type="taxonomic scope" value="Eukaryota"/>
</dbReference>
<dbReference type="HOGENOM" id="CLU_025866_0_0_1"/>
<dbReference type="OMA" id="GMLQQDM"/>
<dbReference type="OrthoDB" id="2214at2759"/>
<dbReference type="BioCyc" id="PCHR:PC13G06380-MONOMER"/>
<dbReference type="Proteomes" id="UP000000724">
    <property type="component" value="Contig Pc00c13"/>
</dbReference>
<dbReference type="GO" id="GO:0005576">
    <property type="term" value="C:extracellular region"/>
    <property type="evidence" value="ECO:0007669"/>
    <property type="project" value="UniProtKB-SubCell"/>
</dbReference>
<dbReference type="GO" id="GO:0004177">
    <property type="term" value="F:aminopeptidase activity"/>
    <property type="evidence" value="ECO:0007669"/>
    <property type="project" value="UniProtKB-KW"/>
</dbReference>
<dbReference type="GO" id="GO:0046872">
    <property type="term" value="F:metal ion binding"/>
    <property type="evidence" value="ECO:0007669"/>
    <property type="project" value="UniProtKB-KW"/>
</dbReference>
<dbReference type="GO" id="GO:0008235">
    <property type="term" value="F:metalloexopeptidase activity"/>
    <property type="evidence" value="ECO:0007669"/>
    <property type="project" value="InterPro"/>
</dbReference>
<dbReference type="GO" id="GO:0006508">
    <property type="term" value="P:proteolysis"/>
    <property type="evidence" value="ECO:0007669"/>
    <property type="project" value="UniProtKB-KW"/>
</dbReference>
<dbReference type="CDD" id="cd03879">
    <property type="entry name" value="M28_AAP"/>
    <property type="match status" value="1"/>
</dbReference>
<dbReference type="FunFam" id="3.40.630.10:FF:000042">
    <property type="entry name" value="Peptide hydrolase"/>
    <property type="match status" value="1"/>
</dbReference>
<dbReference type="Gene3D" id="3.40.630.10">
    <property type="entry name" value="Zn peptidases"/>
    <property type="match status" value="1"/>
</dbReference>
<dbReference type="InterPro" id="IPR045175">
    <property type="entry name" value="M28_fam"/>
</dbReference>
<dbReference type="InterPro" id="IPR007484">
    <property type="entry name" value="Peptidase_M28"/>
</dbReference>
<dbReference type="PANTHER" id="PTHR12147:SF56">
    <property type="entry name" value="AMINOPEPTIDASE YDR415C-RELATED"/>
    <property type="match status" value="1"/>
</dbReference>
<dbReference type="PANTHER" id="PTHR12147">
    <property type="entry name" value="METALLOPEPTIDASE M28 FAMILY MEMBER"/>
    <property type="match status" value="1"/>
</dbReference>
<dbReference type="Pfam" id="PF04389">
    <property type="entry name" value="Peptidase_M28"/>
    <property type="match status" value="1"/>
</dbReference>
<dbReference type="SUPFAM" id="SSF53187">
    <property type="entry name" value="Zn-dependent exopeptidases"/>
    <property type="match status" value="1"/>
</dbReference>
<keyword id="KW-0031">Aminopeptidase</keyword>
<keyword id="KW-1015">Disulfide bond</keyword>
<keyword id="KW-0378">Hydrolase</keyword>
<keyword id="KW-0479">Metal-binding</keyword>
<keyword id="KW-0645">Protease</keyword>
<keyword id="KW-1185">Reference proteome</keyword>
<keyword id="KW-0964">Secreted</keyword>
<keyword id="KW-0732">Signal</keyword>
<keyword id="KW-0862">Zinc</keyword>
<keyword id="KW-0865">Zymogen</keyword>
<comment type="function">
    <text evidence="1">Extracellular aminopeptidase that allows assimilation of proteinaceous substrates.</text>
</comment>
<comment type="cofactor">
    <cofactor evidence="1">
        <name>Zn(2+)</name>
        <dbReference type="ChEBI" id="CHEBI:29105"/>
    </cofactor>
    <text evidence="1">Binds 2 Zn(2+) ions per subunit.</text>
</comment>
<comment type="subunit">
    <text evidence="1">Monomer.</text>
</comment>
<comment type="subcellular location">
    <subcellularLocation>
        <location evidence="1">Secreted</location>
    </subcellularLocation>
</comment>
<comment type="similarity">
    <text evidence="3">Belongs to the peptidase M28 family. M28E subfamily.</text>
</comment>